<comment type="function">
    <text evidence="1">Transfers the 4'-phosphopantetheine moiety from coenzyme A to a Ser of acyl-carrier-protein.</text>
</comment>
<comment type="catalytic activity">
    <reaction evidence="1">
        <text>apo-[ACP] + CoA = holo-[ACP] + adenosine 3',5'-bisphosphate + H(+)</text>
        <dbReference type="Rhea" id="RHEA:12068"/>
        <dbReference type="Rhea" id="RHEA-COMP:9685"/>
        <dbReference type="Rhea" id="RHEA-COMP:9690"/>
        <dbReference type="ChEBI" id="CHEBI:15378"/>
        <dbReference type="ChEBI" id="CHEBI:29999"/>
        <dbReference type="ChEBI" id="CHEBI:57287"/>
        <dbReference type="ChEBI" id="CHEBI:58343"/>
        <dbReference type="ChEBI" id="CHEBI:64479"/>
        <dbReference type="EC" id="2.7.8.7"/>
    </reaction>
</comment>
<comment type="cofactor">
    <cofactor evidence="1">
        <name>Mg(2+)</name>
        <dbReference type="ChEBI" id="CHEBI:18420"/>
    </cofactor>
</comment>
<comment type="subcellular location">
    <subcellularLocation>
        <location evidence="1">Cytoplasm</location>
    </subcellularLocation>
</comment>
<comment type="similarity">
    <text evidence="1">Belongs to the P-Pant transferase superfamily. AcpS family.</text>
</comment>
<evidence type="ECO:0000255" key="1">
    <source>
        <dbReference type="HAMAP-Rule" id="MF_00101"/>
    </source>
</evidence>
<organism>
    <name type="scientific">Mycobacterium bovis (strain BCG / Pasteur 1173P2)</name>
    <dbReference type="NCBI Taxonomy" id="410289"/>
    <lineage>
        <taxon>Bacteria</taxon>
        <taxon>Bacillati</taxon>
        <taxon>Actinomycetota</taxon>
        <taxon>Actinomycetes</taxon>
        <taxon>Mycobacteriales</taxon>
        <taxon>Mycobacteriaceae</taxon>
        <taxon>Mycobacterium</taxon>
        <taxon>Mycobacterium tuberculosis complex</taxon>
    </lineage>
</organism>
<sequence>MGIVGVGIDLVSIPDFAEQVDQPGTVFAETFTPGERRDASDKSSSAARHLAARWAAKEAVIKAWSGSRFAQRPVLPEDIHRDIEVVTDMWGRPRVRLTGAIAEYLADVTIHVSLTHEGDTAAAVAILEAP</sequence>
<accession>A1KLL9</accession>
<reference key="1">
    <citation type="journal article" date="2007" name="Proc. Natl. Acad. Sci. U.S.A.">
        <title>Genome plasticity of BCG and impact on vaccine efficacy.</title>
        <authorList>
            <person name="Brosch R."/>
            <person name="Gordon S.V."/>
            <person name="Garnier T."/>
            <person name="Eiglmeier K."/>
            <person name="Frigui W."/>
            <person name="Valenti P."/>
            <person name="Dos Santos S."/>
            <person name="Duthoy S."/>
            <person name="Lacroix C."/>
            <person name="Garcia-Pelayo C."/>
            <person name="Inwald J.K."/>
            <person name="Golby P."/>
            <person name="Garcia J.N."/>
            <person name="Hewinson R.G."/>
            <person name="Behr M.A."/>
            <person name="Quail M.A."/>
            <person name="Churcher C."/>
            <person name="Barrell B.G."/>
            <person name="Parkhill J."/>
            <person name="Cole S.T."/>
        </authorList>
    </citation>
    <scope>NUCLEOTIDE SEQUENCE [LARGE SCALE GENOMIC DNA]</scope>
    <source>
        <strain>BCG / Pasteur 1173P2</strain>
    </source>
</reference>
<dbReference type="EC" id="2.7.8.7" evidence="1"/>
<dbReference type="EMBL" id="AM408590">
    <property type="protein sequence ID" value="CAL72532.1"/>
    <property type="molecule type" value="Genomic_DNA"/>
</dbReference>
<dbReference type="RefSeq" id="WP_003412952.1">
    <property type="nucleotide sequence ID" value="NC_008769.1"/>
</dbReference>
<dbReference type="SMR" id="A1KLL9"/>
<dbReference type="KEGG" id="mbb:BCG_2544c"/>
<dbReference type="HOGENOM" id="CLU_089696_2_0_11"/>
<dbReference type="Proteomes" id="UP000001472">
    <property type="component" value="Chromosome"/>
</dbReference>
<dbReference type="GO" id="GO:0005737">
    <property type="term" value="C:cytoplasm"/>
    <property type="evidence" value="ECO:0007669"/>
    <property type="project" value="UniProtKB-SubCell"/>
</dbReference>
<dbReference type="GO" id="GO:0008897">
    <property type="term" value="F:holo-[acyl-carrier-protein] synthase activity"/>
    <property type="evidence" value="ECO:0007669"/>
    <property type="project" value="UniProtKB-UniRule"/>
</dbReference>
<dbReference type="GO" id="GO:0000287">
    <property type="term" value="F:magnesium ion binding"/>
    <property type="evidence" value="ECO:0007669"/>
    <property type="project" value="UniProtKB-UniRule"/>
</dbReference>
<dbReference type="GO" id="GO:0006633">
    <property type="term" value="P:fatty acid biosynthetic process"/>
    <property type="evidence" value="ECO:0007669"/>
    <property type="project" value="UniProtKB-UniRule"/>
</dbReference>
<dbReference type="Gene3D" id="3.90.470.20">
    <property type="entry name" value="4'-phosphopantetheinyl transferase domain"/>
    <property type="match status" value="1"/>
</dbReference>
<dbReference type="HAMAP" id="MF_00101">
    <property type="entry name" value="AcpS"/>
    <property type="match status" value="1"/>
</dbReference>
<dbReference type="InterPro" id="IPR008278">
    <property type="entry name" value="4-PPantetheinyl_Trfase_dom"/>
</dbReference>
<dbReference type="InterPro" id="IPR037143">
    <property type="entry name" value="4-PPantetheinyl_Trfase_dom_sf"/>
</dbReference>
<dbReference type="InterPro" id="IPR002582">
    <property type="entry name" value="ACPS"/>
</dbReference>
<dbReference type="InterPro" id="IPR004568">
    <property type="entry name" value="Ppantetheine-prot_Trfase_dom"/>
</dbReference>
<dbReference type="NCBIfam" id="TIGR00556">
    <property type="entry name" value="pantethn_trn"/>
    <property type="match status" value="1"/>
</dbReference>
<dbReference type="NCBIfam" id="NF000831">
    <property type="entry name" value="PRK00070.3-1"/>
    <property type="match status" value="1"/>
</dbReference>
<dbReference type="Pfam" id="PF01648">
    <property type="entry name" value="ACPS"/>
    <property type="match status" value="1"/>
</dbReference>
<dbReference type="SUPFAM" id="SSF56214">
    <property type="entry name" value="4'-phosphopantetheinyl transferase"/>
    <property type="match status" value="1"/>
</dbReference>
<name>ACPS_MYCBP</name>
<feature type="chain" id="PRO_1000008452" description="Holo-[acyl-carrier-protein] synthase">
    <location>
        <begin position="1"/>
        <end position="130"/>
    </location>
</feature>
<feature type="binding site" evidence="1">
    <location>
        <position position="9"/>
    </location>
    <ligand>
        <name>Mg(2+)</name>
        <dbReference type="ChEBI" id="CHEBI:18420"/>
    </ligand>
</feature>
<feature type="binding site" evidence="1">
    <location>
        <position position="58"/>
    </location>
    <ligand>
        <name>Mg(2+)</name>
        <dbReference type="ChEBI" id="CHEBI:18420"/>
    </ligand>
</feature>
<gene>
    <name evidence="1" type="primary">acpS</name>
    <name type="ordered locus">BCG_2544c</name>
</gene>
<proteinExistence type="inferred from homology"/>
<keyword id="KW-0963">Cytoplasm</keyword>
<keyword id="KW-0275">Fatty acid biosynthesis</keyword>
<keyword id="KW-0276">Fatty acid metabolism</keyword>
<keyword id="KW-0444">Lipid biosynthesis</keyword>
<keyword id="KW-0443">Lipid metabolism</keyword>
<keyword id="KW-0460">Magnesium</keyword>
<keyword id="KW-0479">Metal-binding</keyword>
<keyword id="KW-0808">Transferase</keyword>
<protein>
    <recommendedName>
        <fullName evidence="1">Holo-[acyl-carrier-protein] synthase</fullName>
        <shortName evidence="1">Holo-ACP synthase</shortName>
        <ecNumber evidence="1">2.7.8.7</ecNumber>
    </recommendedName>
    <alternativeName>
        <fullName evidence="1">4'-phosphopantetheinyl transferase AcpS</fullName>
    </alternativeName>
</protein>